<sequence>MTKIMFFGTRAYEKDMALRWGKKNNIDVTTSTELLSVDTVDQLKDYDGVTTMQFGKLEPEVYPKLESYGIKQIAQRTAGFDMYDLELAKKHEIIISNIPSYSPETIAEYSVSIALQLVRKFPTIEKRVQAHNFTWASPIMSRPVKNMTVAIIGTGRIGAATGKIYAGFGARVVGYDAYPNHSLSFLEYKETVEDAIKDADIISLHVPANKDSFHLFDNNMFKNVKKGAVLVNAARGAVINTPDLIEAVNNGTLSGAAIDTYENEANYFTFDCSNQTIDDPILLDLIRNENILVTPHIAFFSDEAVQNLVEGGLNAALSVINTGTCDTRLN</sequence>
<proteinExistence type="inferred from homology"/>
<gene>
    <name type="primary">ldhD</name>
    <name type="synonym">ddh</name>
    <name type="ordered locus">SE_2074</name>
</gene>
<feature type="chain" id="PRO_0000075966" description="D-lactate dehydrogenase">
    <location>
        <begin position="1"/>
        <end position="330"/>
    </location>
</feature>
<feature type="active site" evidence="1">
    <location>
        <position position="235"/>
    </location>
</feature>
<feature type="active site" evidence="1">
    <location>
        <position position="264"/>
    </location>
</feature>
<feature type="active site" description="Proton donor" evidence="1">
    <location>
        <position position="296"/>
    </location>
</feature>
<feature type="binding site" evidence="2">
    <location>
        <begin position="156"/>
        <end position="157"/>
    </location>
    <ligand>
        <name>NAD(+)</name>
        <dbReference type="ChEBI" id="CHEBI:57540"/>
    </ligand>
</feature>
<feature type="binding site" evidence="1">
    <location>
        <position position="176"/>
    </location>
    <ligand>
        <name>NAD(+)</name>
        <dbReference type="ChEBI" id="CHEBI:57540"/>
    </ligand>
</feature>
<feature type="binding site" evidence="2">
    <location>
        <begin position="206"/>
        <end position="207"/>
    </location>
    <ligand>
        <name>NAD(+)</name>
        <dbReference type="ChEBI" id="CHEBI:57540"/>
    </ligand>
</feature>
<feature type="binding site" evidence="2">
    <location>
        <begin position="233"/>
        <end position="235"/>
    </location>
    <ligand>
        <name>NAD(+)</name>
        <dbReference type="ChEBI" id="CHEBI:57540"/>
    </ligand>
</feature>
<feature type="binding site" evidence="2">
    <location>
        <position position="259"/>
    </location>
    <ligand>
        <name>NAD(+)</name>
        <dbReference type="ChEBI" id="CHEBI:57540"/>
    </ligand>
</feature>
<organism>
    <name type="scientific">Staphylococcus epidermidis (strain ATCC 12228 / FDA PCI 1200)</name>
    <dbReference type="NCBI Taxonomy" id="176280"/>
    <lineage>
        <taxon>Bacteria</taxon>
        <taxon>Bacillati</taxon>
        <taxon>Bacillota</taxon>
        <taxon>Bacilli</taxon>
        <taxon>Bacillales</taxon>
        <taxon>Staphylococcaceae</taxon>
        <taxon>Staphylococcus</taxon>
    </lineage>
</organism>
<comment type="catalytic activity">
    <reaction>
        <text>(R)-lactate + NAD(+) = pyruvate + NADH + H(+)</text>
        <dbReference type="Rhea" id="RHEA:16369"/>
        <dbReference type="ChEBI" id="CHEBI:15361"/>
        <dbReference type="ChEBI" id="CHEBI:15378"/>
        <dbReference type="ChEBI" id="CHEBI:16004"/>
        <dbReference type="ChEBI" id="CHEBI:57540"/>
        <dbReference type="ChEBI" id="CHEBI:57945"/>
        <dbReference type="EC" id="1.1.1.28"/>
    </reaction>
</comment>
<comment type="similarity">
    <text evidence="3">Belongs to the D-isomer specific 2-hydroxyacid dehydrogenase family.</text>
</comment>
<name>LDHD_STAES</name>
<keyword id="KW-0520">NAD</keyword>
<keyword id="KW-0560">Oxidoreductase</keyword>
<reference key="1">
    <citation type="journal article" date="2003" name="Mol. Microbiol.">
        <title>Genome-based analysis of virulence genes in a non-biofilm-forming Staphylococcus epidermidis strain (ATCC 12228).</title>
        <authorList>
            <person name="Zhang Y.-Q."/>
            <person name="Ren S.-X."/>
            <person name="Li H.-L."/>
            <person name="Wang Y.-X."/>
            <person name="Fu G."/>
            <person name="Yang J."/>
            <person name="Qin Z.-Q."/>
            <person name="Miao Y.-G."/>
            <person name="Wang W.-Y."/>
            <person name="Chen R.-S."/>
            <person name="Shen Y."/>
            <person name="Chen Z."/>
            <person name="Yuan Z.-H."/>
            <person name="Zhao G.-P."/>
            <person name="Qu D."/>
            <person name="Danchin A."/>
            <person name="Wen Y.-M."/>
        </authorList>
    </citation>
    <scope>NUCLEOTIDE SEQUENCE [LARGE SCALE GENOMIC DNA]</scope>
    <source>
        <strain>ATCC 12228 / FDA PCI 1200</strain>
    </source>
</reference>
<accession>Q8CN22</accession>
<protein>
    <recommendedName>
        <fullName>D-lactate dehydrogenase</fullName>
        <shortName>D-LDH</shortName>
        <ecNumber>1.1.1.28</ecNumber>
    </recommendedName>
    <alternativeName>
        <fullName>D-specific 2-hydroxyacid dehydrogenase</fullName>
    </alternativeName>
</protein>
<dbReference type="EC" id="1.1.1.28"/>
<dbReference type="EMBL" id="AE015929">
    <property type="protein sequence ID" value="AAO05716.1"/>
    <property type="molecule type" value="Genomic_DNA"/>
</dbReference>
<dbReference type="RefSeq" id="NP_765629.1">
    <property type="nucleotide sequence ID" value="NC_004461.1"/>
</dbReference>
<dbReference type="RefSeq" id="WP_002456690.1">
    <property type="nucleotide sequence ID" value="NZ_WBME01000003.1"/>
</dbReference>
<dbReference type="SMR" id="Q8CN22"/>
<dbReference type="KEGG" id="sep:SE_2074"/>
<dbReference type="PATRIC" id="fig|176280.10.peg.2026"/>
<dbReference type="eggNOG" id="COG1052">
    <property type="taxonomic scope" value="Bacteria"/>
</dbReference>
<dbReference type="HOGENOM" id="CLU_019796_1_1_9"/>
<dbReference type="OrthoDB" id="9805416at2"/>
<dbReference type="Proteomes" id="UP000001411">
    <property type="component" value="Chromosome"/>
</dbReference>
<dbReference type="GO" id="GO:0008720">
    <property type="term" value="F:D-lactate dehydrogenase activity"/>
    <property type="evidence" value="ECO:0007669"/>
    <property type="project" value="UniProtKB-EC"/>
</dbReference>
<dbReference type="GO" id="GO:0051287">
    <property type="term" value="F:NAD binding"/>
    <property type="evidence" value="ECO:0007669"/>
    <property type="project" value="InterPro"/>
</dbReference>
<dbReference type="CDD" id="cd12186">
    <property type="entry name" value="LDH"/>
    <property type="match status" value="1"/>
</dbReference>
<dbReference type="Gene3D" id="3.40.50.720">
    <property type="entry name" value="NAD(P)-binding Rossmann-like Domain"/>
    <property type="match status" value="2"/>
</dbReference>
<dbReference type="InterPro" id="IPR006139">
    <property type="entry name" value="D-isomer_2_OHA_DH_cat_dom"/>
</dbReference>
<dbReference type="InterPro" id="IPR029753">
    <property type="entry name" value="D-isomer_DH_CS"/>
</dbReference>
<dbReference type="InterPro" id="IPR029752">
    <property type="entry name" value="D-isomer_DH_CS1"/>
</dbReference>
<dbReference type="InterPro" id="IPR006140">
    <property type="entry name" value="D-isomer_DH_NAD-bd"/>
</dbReference>
<dbReference type="InterPro" id="IPR036291">
    <property type="entry name" value="NAD(P)-bd_dom_sf"/>
</dbReference>
<dbReference type="NCBIfam" id="NF006374">
    <property type="entry name" value="PRK08605.1"/>
    <property type="match status" value="1"/>
</dbReference>
<dbReference type="NCBIfam" id="NF009127">
    <property type="entry name" value="PRK12480.1"/>
    <property type="match status" value="1"/>
</dbReference>
<dbReference type="PANTHER" id="PTHR43026">
    <property type="entry name" value="2-HYDROXYACID DEHYDROGENASE HOMOLOG 1-RELATED"/>
    <property type="match status" value="1"/>
</dbReference>
<dbReference type="PANTHER" id="PTHR43026:SF1">
    <property type="entry name" value="2-HYDROXYACID DEHYDROGENASE HOMOLOG 1-RELATED"/>
    <property type="match status" value="1"/>
</dbReference>
<dbReference type="Pfam" id="PF00389">
    <property type="entry name" value="2-Hacid_dh"/>
    <property type="match status" value="1"/>
</dbReference>
<dbReference type="Pfam" id="PF02826">
    <property type="entry name" value="2-Hacid_dh_C"/>
    <property type="match status" value="1"/>
</dbReference>
<dbReference type="SUPFAM" id="SSF52283">
    <property type="entry name" value="Formate/glycerate dehydrogenase catalytic domain-like"/>
    <property type="match status" value="1"/>
</dbReference>
<dbReference type="SUPFAM" id="SSF51735">
    <property type="entry name" value="NAD(P)-binding Rossmann-fold domains"/>
    <property type="match status" value="1"/>
</dbReference>
<dbReference type="PROSITE" id="PS00065">
    <property type="entry name" value="D_2_HYDROXYACID_DH_1"/>
    <property type="match status" value="1"/>
</dbReference>
<dbReference type="PROSITE" id="PS00670">
    <property type="entry name" value="D_2_HYDROXYACID_DH_2"/>
    <property type="match status" value="1"/>
</dbReference>
<dbReference type="PROSITE" id="PS00671">
    <property type="entry name" value="D_2_HYDROXYACID_DH_3"/>
    <property type="match status" value="1"/>
</dbReference>
<evidence type="ECO:0000250" key="1">
    <source>
        <dbReference type="UniProtKB" id="P26297"/>
    </source>
</evidence>
<evidence type="ECO:0000250" key="2">
    <source>
        <dbReference type="UniProtKB" id="P30901"/>
    </source>
</evidence>
<evidence type="ECO:0000305" key="3"/>